<name>RL33_FRATF</name>
<feature type="chain" id="PRO_0000356462" description="Large ribosomal subunit protein bL33">
    <location>
        <begin position="1"/>
        <end position="51"/>
    </location>
</feature>
<comment type="similarity">
    <text evidence="1">Belongs to the bacterial ribosomal protein bL33 family.</text>
</comment>
<organism>
    <name type="scientific">Francisella tularensis subsp. holarctica (strain FTNF002-00 / FTA)</name>
    <dbReference type="NCBI Taxonomy" id="458234"/>
    <lineage>
        <taxon>Bacteria</taxon>
        <taxon>Pseudomonadati</taxon>
        <taxon>Pseudomonadota</taxon>
        <taxon>Gammaproteobacteria</taxon>
        <taxon>Thiotrichales</taxon>
        <taxon>Francisellaceae</taxon>
        <taxon>Francisella</taxon>
    </lineage>
</organism>
<proteinExistence type="inferred from homology"/>
<reference key="1">
    <citation type="journal article" date="2009" name="PLoS ONE">
        <title>Complete genome sequence of Francisella tularensis subspecies holarctica FTNF002-00.</title>
        <authorList>
            <person name="Barabote R.D."/>
            <person name="Xie G."/>
            <person name="Brettin T.S."/>
            <person name="Hinrichs S.H."/>
            <person name="Fey P.D."/>
            <person name="Jay J.J."/>
            <person name="Engle J.L."/>
            <person name="Godbole S.D."/>
            <person name="Noronha J.M."/>
            <person name="Scheuermann R.H."/>
            <person name="Zhou L.W."/>
            <person name="Lion C."/>
            <person name="Dempsey M.P."/>
        </authorList>
    </citation>
    <scope>NUCLEOTIDE SEQUENCE [LARGE SCALE GENOMIC DNA]</scope>
    <source>
        <strain>FTNF002-00 / FTA</strain>
    </source>
</reference>
<gene>
    <name evidence="1" type="primary">rpmG</name>
    <name type="ordered locus">FTA_0550</name>
</gene>
<sequence length="51" mass="6141">MREKIRLVSSAKTGHFYTTTKNKKEMPNKMEIKKYDPVVRKHVMYKEAKIK</sequence>
<dbReference type="EMBL" id="CP000803">
    <property type="protein sequence ID" value="ABU61026.1"/>
    <property type="molecule type" value="Genomic_DNA"/>
</dbReference>
<dbReference type="RefSeq" id="WP_003014820.1">
    <property type="nucleotide sequence ID" value="NC_009749.1"/>
</dbReference>
<dbReference type="SMR" id="A7NAM3"/>
<dbReference type="GeneID" id="75264166"/>
<dbReference type="KEGG" id="fta:FTA_0550"/>
<dbReference type="HOGENOM" id="CLU_190949_1_1_6"/>
<dbReference type="GO" id="GO:0022625">
    <property type="term" value="C:cytosolic large ribosomal subunit"/>
    <property type="evidence" value="ECO:0007669"/>
    <property type="project" value="TreeGrafter"/>
</dbReference>
<dbReference type="GO" id="GO:0003735">
    <property type="term" value="F:structural constituent of ribosome"/>
    <property type="evidence" value="ECO:0007669"/>
    <property type="project" value="InterPro"/>
</dbReference>
<dbReference type="GO" id="GO:0006412">
    <property type="term" value="P:translation"/>
    <property type="evidence" value="ECO:0007669"/>
    <property type="project" value="UniProtKB-UniRule"/>
</dbReference>
<dbReference type="FunFam" id="2.20.28.120:FF:000001">
    <property type="entry name" value="50S ribosomal protein L33"/>
    <property type="match status" value="1"/>
</dbReference>
<dbReference type="Gene3D" id="2.20.28.120">
    <property type="entry name" value="Ribosomal protein L33"/>
    <property type="match status" value="1"/>
</dbReference>
<dbReference type="HAMAP" id="MF_00294">
    <property type="entry name" value="Ribosomal_bL33"/>
    <property type="match status" value="1"/>
</dbReference>
<dbReference type="InterPro" id="IPR001705">
    <property type="entry name" value="Ribosomal_bL33"/>
</dbReference>
<dbReference type="InterPro" id="IPR018264">
    <property type="entry name" value="Ribosomal_bL33_CS"/>
</dbReference>
<dbReference type="InterPro" id="IPR038584">
    <property type="entry name" value="Ribosomal_bL33_sf"/>
</dbReference>
<dbReference type="InterPro" id="IPR011332">
    <property type="entry name" value="Ribosomal_zn-bd"/>
</dbReference>
<dbReference type="NCBIfam" id="NF001860">
    <property type="entry name" value="PRK00595.1"/>
    <property type="match status" value="1"/>
</dbReference>
<dbReference type="NCBIfam" id="TIGR01023">
    <property type="entry name" value="rpmG_bact"/>
    <property type="match status" value="1"/>
</dbReference>
<dbReference type="PANTHER" id="PTHR15238">
    <property type="entry name" value="54S RIBOSOMAL PROTEIN L39, MITOCHONDRIAL"/>
    <property type="match status" value="1"/>
</dbReference>
<dbReference type="PANTHER" id="PTHR15238:SF1">
    <property type="entry name" value="LARGE RIBOSOMAL SUBUNIT PROTEIN BL33M"/>
    <property type="match status" value="1"/>
</dbReference>
<dbReference type="Pfam" id="PF00471">
    <property type="entry name" value="Ribosomal_L33"/>
    <property type="match status" value="1"/>
</dbReference>
<dbReference type="SUPFAM" id="SSF57829">
    <property type="entry name" value="Zn-binding ribosomal proteins"/>
    <property type="match status" value="1"/>
</dbReference>
<dbReference type="PROSITE" id="PS00582">
    <property type="entry name" value="RIBOSOMAL_L33"/>
    <property type="match status" value="1"/>
</dbReference>
<keyword id="KW-0687">Ribonucleoprotein</keyword>
<keyword id="KW-0689">Ribosomal protein</keyword>
<evidence type="ECO:0000255" key="1">
    <source>
        <dbReference type="HAMAP-Rule" id="MF_00294"/>
    </source>
</evidence>
<evidence type="ECO:0000305" key="2"/>
<protein>
    <recommendedName>
        <fullName evidence="1">Large ribosomal subunit protein bL33</fullName>
    </recommendedName>
    <alternativeName>
        <fullName evidence="2">50S ribosomal protein L33</fullName>
    </alternativeName>
</protein>
<accession>A7NAM3</accession>